<comment type="function">
    <text evidence="1">Probably involved in the control of the structural glucose backbone of osmoregulated periplasmic glucans (OPGs).</text>
</comment>
<comment type="pathway">
    <text evidence="1">Glycan metabolism; osmoregulated periplasmic glucan (OPG) biosynthesis.</text>
</comment>
<comment type="subcellular location">
    <subcellularLocation>
        <location evidence="1">Periplasm</location>
    </subcellularLocation>
</comment>
<comment type="PTM">
    <text>Predicted to be exported by the Tat system. The position of the signal peptide cleavage has not been experimentally proven.</text>
</comment>
<comment type="similarity">
    <text evidence="1">Belongs to the OpgD/OpgG family.</text>
</comment>
<keyword id="KW-0574">Periplasm</keyword>
<keyword id="KW-0732">Signal</keyword>
<proteinExistence type="inferred from homology"/>
<name>OPGD_PSEPF</name>
<reference key="1">
    <citation type="journal article" date="2009" name="Genome Biol.">
        <title>Genomic and genetic analyses of diversity and plant interactions of Pseudomonas fluorescens.</title>
        <authorList>
            <person name="Silby M.W."/>
            <person name="Cerdeno-Tarraga A.M."/>
            <person name="Vernikos G.S."/>
            <person name="Giddens S.R."/>
            <person name="Jackson R.W."/>
            <person name="Preston G.M."/>
            <person name="Zhang X.-X."/>
            <person name="Moon C.D."/>
            <person name="Gehrig S.M."/>
            <person name="Godfrey S.A.C."/>
            <person name="Knight C.G."/>
            <person name="Malone J.G."/>
            <person name="Robinson Z."/>
            <person name="Spiers A.J."/>
            <person name="Harris S."/>
            <person name="Challis G.L."/>
            <person name="Yaxley A.M."/>
            <person name="Harris D."/>
            <person name="Seeger K."/>
            <person name="Murphy L."/>
            <person name="Rutter S."/>
            <person name="Squares R."/>
            <person name="Quail M.A."/>
            <person name="Saunders E."/>
            <person name="Mavromatis K."/>
            <person name="Brettin T.S."/>
            <person name="Bentley S.D."/>
            <person name="Hothersall J."/>
            <person name="Stephens E."/>
            <person name="Thomas C.M."/>
            <person name="Parkhill J."/>
            <person name="Levy S.B."/>
            <person name="Rainey P.B."/>
            <person name="Thomson N.R."/>
        </authorList>
    </citation>
    <scope>NUCLEOTIDE SEQUENCE [LARGE SCALE GENOMIC DNA]</scope>
    <source>
        <strain>Pf0-1</strain>
    </source>
</reference>
<sequence>MHRRNLLKASMAIAAYTGLSATGLLASRAWAASGGAADGEAQAFDFETLKRQAKQLAGSAYQDTKQVLPPTLATMTPQNFNAIRYDGEHSLWKENKGQLDVQFFHVGMGFRQPVRMYSVDPKTRTAREVHFRPQLFNYENTSVDTQQLKGDLGFAGFKLFKAPELDRHDVVSFLGASYFRAVDATGQYGLSARGLAVDTYAKKREEFPDFTKFWFETPDQNATRFVVYALLDSPSATGAYRFDIDCQAERVVMEVDAHINARTAIEQLGIAPMTSMFSCGTHERRMCDTIHPQIHDSDRLAMWRGNGEWICRPLNNPATLQFNAFADTDPKGFGLVQTDHEFANYQDTVDWYSKRPSLWVEPTTAWGEGSIDLLEIPTTGETLDNIVAFWTPKKPVAAGDSLNYGYKLYWSALPPVGTPLARVHATRSGMGGFVEGWAPGEHYPPVWARRFAVDFTGGGLDRLPQGTGIEPVVTCSNGKVQDFSVLVLDDIKGYRILFDWYPTNDSVEPVELRLFIRTNDRTLSETWLYQYFPPAPDKRKYP</sequence>
<gene>
    <name evidence="1" type="primary">opgD</name>
    <name type="ordered locus">Pfl01_1038</name>
</gene>
<organism>
    <name type="scientific">Pseudomonas fluorescens (strain Pf0-1)</name>
    <dbReference type="NCBI Taxonomy" id="205922"/>
    <lineage>
        <taxon>Bacteria</taxon>
        <taxon>Pseudomonadati</taxon>
        <taxon>Pseudomonadota</taxon>
        <taxon>Gammaproteobacteria</taxon>
        <taxon>Pseudomonadales</taxon>
        <taxon>Pseudomonadaceae</taxon>
        <taxon>Pseudomonas</taxon>
    </lineage>
</organism>
<accession>Q3KHH5</accession>
<evidence type="ECO:0000255" key="1">
    <source>
        <dbReference type="HAMAP-Rule" id="MF_01068"/>
    </source>
</evidence>
<protein>
    <recommendedName>
        <fullName evidence="1">Glucans biosynthesis protein D</fullName>
    </recommendedName>
</protein>
<dbReference type="EMBL" id="CP000094">
    <property type="protein sequence ID" value="ABA72781.1"/>
    <property type="molecule type" value="Genomic_DNA"/>
</dbReference>
<dbReference type="RefSeq" id="WP_011332628.1">
    <property type="nucleotide sequence ID" value="NC_007492.2"/>
</dbReference>
<dbReference type="SMR" id="Q3KHH5"/>
<dbReference type="KEGG" id="pfo:Pfl01_1038"/>
<dbReference type="eggNOG" id="COG3131">
    <property type="taxonomic scope" value="Bacteria"/>
</dbReference>
<dbReference type="HOGENOM" id="CLU_023403_2_0_6"/>
<dbReference type="UniPathway" id="UPA00637"/>
<dbReference type="Proteomes" id="UP000002704">
    <property type="component" value="Chromosome"/>
</dbReference>
<dbReference type="GO" id="GO:0030288">
    <property type="term" value="C:outer membrane-bounded periplasmic space"/>
    <property type="evidence" value="ECO:0007669"/>
    <property type="project" value="TreeGrafter"/>
</dbReference>
<dbReference type="GO" id="GO:0030246">
    <property type="term" value="F:carbohydrate binding"/>
    <property type="evidence" value="ECO:0007669"/>
    <property type="project" value="InterPro"/>
</dbReference>
<dbReference type="GO" id="GO:0003824">
    <property type="term" value="F:catalytic activity"/>
    <property type="evidence" value="ECO:0007669"/>
    <property type="project" value="InterPro"/>
</dbReference>
<dbReference type="GO" id="GO:0051274">
    <property type="term" value="P:beta-glucan biosynthetic process"/>
    <property type="evidence" value="ECO:0007669"/>
    <property type="project" value="TreeGrafter"/>
</dbReference>
<dbReference type="Gene3D" id="2.70.98.10">
    <property type="match status" value="1"/>
</dbReference>
<dbReference type="Gene3D" id="2.60.40.10">
    <property type="entry name" value="Immunoglobulins"/>
    <property type="match status" value="1"/>
</dbReference>
<dbReference type="HAMAP" id="MF_01068">
    <property type="entry name" value="MdoD_OpgD"/>
    <property type="match status" value="1"/>
</dbReference>
<dbReference type="InterPro" id="IPR011013">
    <property type="entry name" value="Gal_mutarotase_sf_dom"/>
</dbReference>
<dbReference type="InterPro" id="IPR014718">
    <property type="entry name" value="GH-type_carb-bd"/>
</dbReference>
<dbReference type="InterPro" id="IPR023724">
    <property type="entry name" value="Glucan_biosyn_MdoD"/>
</dbReference>
<dbReference type="InterPro" id="IPR014438">
    <property type="entry name" value="Glucan_biosyn_MdoG/MdoD"/>
</dbReference>
<dbReference type="InterPro" id="IPR007444">
    <property type="entry name" value="Glucan_biosyn_MdoG_C"/>
</dbReference>
<dbReference type="InterPro" id="IPR013783">
    <property type="entry name" value="Ig-like_fold"/>
</dbReference>
<dbReference type="InterPro" id="IPR014756">
    <property type="entry name" value="Ig_E-set"/>
</dbReference>
<dbReference type="InterPro" id="IPR006311">
    <property type="entry name" value="TAT_signal"/>
</dbReference>
<dbReference type="PANTHER" id="PTHR30504">
    <property type="entry name" value="GLUCANS BIOSYNTHESIS PROTEIN"/>
    <property type="match status" value="1"/>
</dbReference>
<dbReference type="PANTHER" id="PTHR30504:SF3">
    <property type="entry name" value="GLUCANS BIOSYNTHESIS PROTEIN D"/>
    <property type="match status" value="1"/>
</dbReference>
<dbReference type="Pfam" id="PF04349">
    <property type="entry name" value="MdoG"/>
    <property type="match status" value="1"/>
</dbReference>
<dbReference type="PIRSF" id="PIRSF006281">
    <property type="entry name" value="MdoG"/>
    <property type="match status" value="1"/>
</dbReference>
<dbReference type="SUPFAM" id="SSF81296">
    <property type="entry name" value="E set domains"/>
    <property type="match status" value="1"/>
</dbReference>
<dbReference type="SUPFAM" id="SSF74650">
    <property type="entry name" value="Galactose mutarotase-like"/>
    <property type="match status" value="1"/>
</dbReference>
<dbReference type="PROSITE" id="PS51318">
    <property type="entry name" value="TAT"/>
    <property type="match status" value="1"/>
</dbReference>
<feature type="signal peptide" description="Tat-type signal" evidence="1">
    <location>
        <begin position="1"/>
        <end position="31"/>
    </location>
</feature>
<feature type="chain" id="PRO_5000001605" description="Glucans biosynthesis protein D">
    <location>
        <begin position="32"/>
        <end position="542"/>
    </location>
</feature>